<keyword id="KW-0066">ATP synthesis</keyword>
<keyword id="KW-1003">Cell membrane</keyword>
<keyword id="KW-0139">CF(1)</keyword>
<keyword id="KW-0375">Hydrogen ion transport</keyword>
<keyword id="KW-0406">Ion transport</keyword>
<keyword id="KW-0472">Membrane</keyword>
<keyword id="KW-0813">Transport</keyword>
<evidence type="ECO:0000255" key="1">
    <source>
        <dbReference type="HAMAP-Rule" id="MF_01416"/>
    </source>
</evidence>
<sequence length="180" mass="20487">MSNGIVAKRYAVALFKIAKEKHVLEMFEEELRLVQNVYEKNGELHSFLTQPNISKEQKKTFLANVFGSVSESILNTLYILIDNKRIDILSDIANEYVVLANEERNVADATVYSTRLLSEEEKLNIAEAFAKRTGKDAIRVKNVVDEDLLGGIKVRIGNRIYDGSLQGKLARIQRELMKNR</sequence>
<name>ATPD_BACAC</name>
<proteinExistence type="inferred from homology"/>
<accession>C3LFI2</accession>
<protein>
    <recommendedName>
        <fullName evidence="1">ATP synthase subunit delta</fullName>
    </recommendedName>
    <alternativeName>
        <fullName evidence="1">ATP synthase F(1) sector subunit delta</fullName>
    </alternativeName>
    <alternativeName>
        <fullName evidence="1">F-type ATPase subunit delta</fullName>
        <shortName evidence="1">F-ATPase subunit delta</shortName>
    </alternativeName>
</protein>
<feature type="chain" id="PRO_1000184646" description="ATP synthase subunit delta">
    <location>
        <begin position="1"/>
        <end position="180"/>
    </location>
</feature>
<comment type="function">
    <text evidence="1">F(1)F(0) ATP synthase produces ATP from ADP in the presence of a proton or sodium gradient. F-type ATPases consist of two structural domains, F(1) containing the extramembraneous catalytic core and F(0) containing the membrane proton channel, linked together by a central stalk and a peripheral stalk. During catalysis, ATP synthesis in the catalytic domain of F(1) is coupled via a rotary mechanism of the central stalk subunits to proton translocation.</text>
</comment>
<comment type="function">
    <text evidence="1">This protein is part of the stalk that links CF(0) to CF(1). It either transmits conformational changes from CF(0) to CF(1) or is implicated in proton conduction.</text>
</comment>
<comment type="subunit">
    <text evidence="1">F-type ATPases have 2 components, F(1) - the catalytic core - and F(0) - the membrane proton channel. F(1) has five subunits: alpha(3), beta(3), gamma(1), delta(1), epsilon(1). F(0) has three main subunits: a(1), b(2) and c(10-14). The alpha and beta chains form an alternating ring which encloses part of the gamma chain. F(1) is attached to F(0) by a central stalk formed by the gamma and epsilon chains, while a peripheral stalk is formed by the delta and b chains.</text>
</comment>
<comment type="subcellular location">
    <subcellularLocation>
        <location evidence="1">Cell membrane</location>
        <topology evidence="1">Peripheral membrane protein</topology>
    </subcellularLocation>
</comment>
<comment type="similarity">
    <text evidence="1">Belongs to the ATPase delta chain family.</text>
</comment>
<gene>
    <name evidence="1" type="primary">atpH</name>
    <name type="ordered locus">BAMEG_5597</name>
</gene>
<dbReference type="EMBL" id="CP001215">
    <property type="protein sequence ID" value="ACP13505.1"/>
    <property type="molecule type" value="Genomic_DNA"/>
</dbReference>
<dbReference type="RefSeq" id="WP_000064678.1">
    <property type="nucleotide sequence ID" value="NC_012581.1"/>
</dbReference>
<dbReference type="SMR" id="C3LFI2"/>
<dbReference type="GeneID" id="45025138"/>
<dbReference type="KEGG" id="bah:BAMEG_5597"/>
<dbReference type="HOGENOM" id="CLU_085114_4_1_9"/>
<dbReference type="GO" id="GO:0005886">
    <property type="term" value="C:plasma membrane"/>
    <property type="evidence" value="ECO:0007669"/>
    <property type="project" value="UniProtKB-SubCell"/>
</dbReference>
<dbReference type="GO" id="GO:0045259">
    <property type="term" value="C:proton-transporting ATP synthase complex"/>
    <property type="evidence" value="ECO:0007669"/>
    <property type="project" value="UniProtKB-KW"/>
</dbReference>
<dbReference type="GO" id="GO:0046933">
    <property type="term" value="F:proton-transporting ATP synthase activity, rotational mechanism"/>
    <property type="evidence" value="ECO:0007669"/>
    <property type="project" value="UniProtKB-UniRule"/>
</dbReference>
<dbReference type="Gene3D" id="1.10.520.20">
    <property type="entry name" value="N-terminal domain of the delta subunit of the F1F0-ATP synthase"/>
    <property type="match status" value="1"/>
</dbReference>
<dbReference type="HAMAP" id="MF_01416">
    <property type="entry name" value="ATP_synth_delta_bact"/>
    <property type="match status" value="1"/>
</dbReference>
<dbReference type="InterPro" id="IPR026015">
    <property type="entry name" value="ATP_synth_OSCP/delta_N_sf"/>
</dbReference>
<dbReference type="InterPro" id="IPR020781">
    <property type="entry name" value="ATPase_OSCP/d_CS"/>
</dbReference>
<dbReference type="InterPro" id="IPR000711">
    <property type="entry name" value="ATPase_OSCP/dsu"/>
</dbReference>
<dbReference type="NCBIfam" id="TIGR01145">
    <property type="entry name" value="ATP_synt_delta"/>
    <property type="match status" value="1"/>
</dbReference>
<dbReference type="NCBIfam" id="NF004402">
    <property type="entry name" value="PRK05758.2-2"/>
    <property type="match status" value="1"/>
</dbReference>
<dbReference type="NCBIfam" id="NF004403">
    <property type="entry name" value="PRK05758.2-4"/>
    <property type="match status" value="1"/>
</dbReference>
<dbReference type="PANTHER" id="PTHR11910">
    <property type="entry name" value="ATP SYNTHASE DELTA CHAIN"/>
    <property type="match status" value="1"/>
</dbReference>
<dbReference type="Pfam" id="PF00213">
    <property type="entry name" value="OSCP"/>
    <property type="match status" value="1"/>
</dbReference>
<dbReference type="PRINTS" id="PR00125">
    <property type="entry name" value="ATPASEDELTA"/>
</dbReference>
<dbReference type="SUPFAM" id="SSF47928">
    <property type="entry name" value="N-terminal domain of the delta subunit of the F1F0-ATP synthase"/>
    <property type="match status" value="1"/>
</dbReference>
<dbReference type="PROSITE" id="PS00389">
    <property type="entry name" value="ATPASE_DELTA"/>
    <property type="match status" value="1"/>
</dbReference>
<organism>
    <name type="scientific">Bacillus anthracis (strain CDC 684 / NRRL 3495)</name>
    <dbReference type="NCBI Taxonomy" id="568206"/>
    <lineage>
        <taxon>Bacteria</taxon>
        <taxon>Bacillati</taxon>
        <taxon>Bacillota</taxon>
        <taxon>Bacilli</taxon>
        <taxon>Bacillales</taxon>
        <taxon>Bacillaceae</taxon>
        <taxon>Bacillus</taxon>
        <taxon>Bacillus cereus group</taxon>
    </lineage>
</organism>
<reference key="1">
    <citation type="submission" date="2008-10" db="EMBL/GenBank/DDBJ databases">
        <title>Genome sequence of Bacillus anthracis str. CDC 684.</title>
        <authorList>
            <person name="Dodson R.J."/>
            <person name="Munk A.C."/>
            <person name="Brettin T."/>
            <person name="Bruce D."/>
            <person name="Detter C."/>
            <person name="Tapia R."/>
            <person name="Han C."/>
            <person name="Sutton G."/>
            <person name="Sims D."/>
        </authorList>
    </citation>
    <scope>NUCLEOTIDE SEQUENCE [LARGE SCALE GENOMIC DNA]</scope>
    <source>
        <strain>CDC 684 / NRRL 3495</strain>
    </source>
</reference>